<reference key="1">
    <citation type="journal article" date="1985" name="Peptides 6 Suppl.">
        <title>Amino acid sequence of bumblebee MCD peptide: a new mast cell degranulating peptide from the venom of the bumblebee Megabombus pennsylvanicus.</title>
        <authorList>
            <person name="Argiolas A."/>
            <person name="Herring P."/>
            <person name="Pisano J.J."/>
        </authorList>
    </citation>
    <scope>PROTEIN SEQUENCE</scope>
    <source>
        <tissue>Venom</tissue>
    </source>
</reference>
<accession>P04567</accession>
<dbReference type="PIR" id="JW0019">
    <property type="entry name" value="JW0019"/>
</dbReference>
<dbReference type="GO" id="GO:0005576">
    <property type="term" value="C:extracellular region"/>
    <property type="evidence" value="ECO:0007669"/>
    <property type="project" value="UniProtKB-SubCell"/>
</dbReference>
<name>MCDP_BOMPE</name>
<proteinExistence type="evidence at protein level"/>
<protein>
    <recommendedName>
        <fullName>Mast cell degranulating peptide</fullName>
        <shortName>MCD peptide</shortName>
        <shortName>MCDP</shortName>
    </recommendedName>
</protein>
<feature type="peptide" id="PRO_0000044064" description="Mast cell degranulating peptide">
    <location>
        <begin position="1"/>
        <end position="28"/>
    </location>
</feature>
<feature type="disulfide bond">
    <location>
        <begin position="2"/>
        <end position="18"/>
    </location>
</feature>
<feature type="disulfide bond">
    <location>
        <begin position="4"/>
        <end position="22"/>
    </location>
</feature>
<comment type="function">
    <text>Mast cell degranulating peptide.</text>
</comment>
<comment type="subcellular location">
    <subcellularLocation>
        <location>Secreted</location>
    </subcellularLocation>
</comment>
<comment type="tissue specificity">
    <text>Expressed by the venom gland.</text>
</comment>
<organism>
    <name type="scientific">Bombus pensylvanicus</name>
    <name type="common">American bumblebee</name>
    <name type="synonym">Apis pensylvanica</name>
    <dbReference type="NCBI Taxonomy" id="28643"/>
    <lineage>
        <taxon>Eukaryota</taxon>
        <taxon>Metazoa</taxon>
        <taxon>Ecdysozoa</taxon>
        <taxon>Arthropoda</taxon>
        <taxon>Hexapoda</taxon>
        <taxon>Insecta</taxon>
        <taxon>Pterygota</taxon>
        <taxon>Neoptera</taxon>
        <taxon>Endopterygota</taxon>
        <taxon>Hymenoptera</taxon>
        <taxon>Apocrita</taxon>
        <taxon>Aculeata</taxon>
        <taxon>Apoidea</taxon>
        <taxon>Anthophila</taxon>
        <taxon>Apidae</taxon>
        <taxon>Bombus</taxon>
        <taxon>Fervidobombus</taxon>
    </lineage>
</organism>
<keyword id="KW-0903">Direct protein sequencing</keyword>
<keyword id="KW-1015">Disulfide bond</keyword>
<keyword id="KW-0467">Mast cell degranulation</keyword>
<keyword id="KW-0964">Secreted</keyword>
<sequence>MCICKNGKPLPGFIGKICRKICMMQQTH</sequence>